<sequence length="186" mass="20040">MADTWEAAHSAIKTGIIAYPTEAVFGLGCDPRNEVAVQKLLSLKQRPAEKGLILIAADYSQLLPYVEDSAIAQDKRFSVLSHWPGPVTLILPVRKGVSTLLTGGRDTIAVRVTAHEPARALCRELGHALVSTSANLTGQEPARTAAEVRQQFGDSVDWIMDESTGGAANPTRIINPLNNQVFRDDA</sequence>
<protein>
    <recommendedName>
        <fullName evidence="1">Threonylcarbamoyl-AMP synthase</fullName>
        <shortName evidence="1">TC-AMP synthase</shortName>
        <ecNumber evidence="1">2.7.7.87</ecNumber>
    </recommendedName>
    <alternativeName>
        <fullName evidence="1">L-threonylcarbamoyladenylate synthase</fullName>
    </alternativeName>
    <alternativeName>
        <fullName evidence="1">t(6)A37 threonylcarbamoyladenosine biosynthesis protein TsaC</fullName>
    </alternativeName>
    <alternativeName>
        <fullName evidence="1">tRNA threonylcarbamoyladenosine biosynthesis protein TsaC</fullName>
    </alternativeName>
</protein>
<reference key="1">
    <citation type="journal article" date="2004" name="Proc. Natl. Acad. Sci. U.S.A.">
        <title>Genome sequence of the deep-sea gamma-proteobacterium Idiomarina loihiensis reveals amino acid fermentation as a source of carbon and energy.</title>
        <authorList>
            <person name="Hou S."/>
            <person name="Saw J.H."/>
            <person name="Lee K.S."/>
            <person name="Freitas T.A."/>
            <person name="Belisle C."/>
            <person name="Kawarabayasi Y."/>
            <person name="Donachie S.P."/>
            <person name="Pikina A."/>
            <person name="Galperin M.Y."/>
            <person name="Koonin E.V."/>
            <person name="Makarova K.S."/>
            <person name="Omelchenko M.V."/>
            <person name="Sorokin A."/>
            <person name="Wolf Y.I."/>
            <person name="Li Q.X."/>
            <person name="Keum Y.S."/>
            <person name="Campbell S."/>
            <person name="Denery J."/>
            <person name="Aizawa S."/>
            <person name="Shibata S."/>
            <person name="Malahoff A."/>
            <person name="Alam M."/>
        </authorList>
    </citation>
    <scope>NUCLEOTIDE SEQUENCE [LARGE SCALE GENOMIC DNA]</scope>
    <source>
        <strain>ATCC BAA-735 / DSM 15497 / L2-TR</strain>
    </source>
</reference>
<comment type="function">
    <text evidence="1">Required for the formation of a threonylcarbamoyl group on adenosine at position 37 (t(6)A37) in tRNAs that read codons beginning with adenine. Catalyzes the conversion of L-threonine, HCO(3)(-)/CO(2) and ATP to give threonylcarbamoyl-AMP (TC-AMP) as the acyladenylate intermediate, with the release of diphosphate.</text>
</comment>
<comment type="catalytic activity">
    <reaction evidence="1">
        <text>L-threonine + hydrogencarbonate + ATP = L-threonylcarbamoyladenylate + diphosphate + H2O</text>
        <dbReference type="Rhea" id="RHEA:36407"/>
        <dbReference type="ChEBI" id="CHEBI:15377"/>
        <dbReference type="ChEBI" id="CHEBI:17544"/>
        <dbReference type="ChEBI" id="CHEBI:30616"/>
        <dbReference type="ChEBI" id="CHEBI:33019"/>
        <dbReference type="ChEBI" id="CHEBI:57926"/>
        <dbReference type="ChEBI" id="CHEBI:73682"/>
        <dbReference type="EC" id="2.7.7.87"/>
    </reaction>
</comment>
<comment type="subcellular location">
    <subcellularLocation>
        <location evidence="1">Cytoplasm</location>
    </subcellularLocation>
</comment>
<comment type="similarity">
    <text evidence="1">Belongs to the SUA5 family. TsaC subfamily.</text>
</comment>
<dbReference type="EC" id="2.7.7.87" evidence="1"/>
<dbReference type="EMBL" id="AE017340">
    <property type="protein sequence ID" value="AAV80866.1"/>
    <property type="molecule type" value="Genomic_DNA"/>
</dbReference>
<dbReference type="RefSeq" id="WP_011233286.1">
    <property type="nucleotide sequence ID" value="NC_006512.1"/>
</dbReference>
<dbReference type="SMR" id="Q5QXJ5"/>
<dbReference type="STRING" id="283942.IL0022"/>
<dbReference type="GeneID" id="41335170"/>
<dbReference type="KEGG" id="ilo:IL0022"/>
<dbReference type="eggNOG" id="COG0009">
    <property type="taxonomic scope" value="Bacteria"/>
</dbReference>
<dbReference type="HOGENOM" id="CLU_031397_6_0_6"/>
<dbReference type="OrthoDB" id="9814580at2"/>
<dbReference type="Proteomes" id="UP000001171">
    <property type="component" value="Chromosome"/>
</dbReference>
<dbReference type="GO" id="GO:0005737">
    <property type="term" value="C:cytoplasm"/>
    <property type="evidence" value="ECO:0007669"/>
    <property type="project" value="UniProtKB-SubCell"/>
</dbReference>
<dbReference type="GO" id="GO:0005524">
    <property type="term" value="F:ATP binding"/>
    <property type="evidence" value="ECO:0007669"/>
    <property type="project" value="UniProtKB-UniRule"/>
</dbReference>
<dbReference type="GO" id="GO:0003725">
    <property type="term" value="F:double-stranded RNA binding"/>
    <property type="evidence" value="ECO:0007669"/>
    <property type="project" value="InterPro"/>
</dbReference>
<dbReference type="GO" id="GO:0061710">
    <property type="term" value="F:L-threonylcarbamoyladenylate synthase"/>
    <property type="evidence" value="ECO:0007669"/>
    <property type="project" value="UniProtKB-EC"/>
</dbReference>
<dbReference type="GO" id="GO:0000049">
    <property type="term" value="F:tRNA binding"/>
    <property type="evidence" value="ECO:0007669"/>
    <property type="project" value="TreeGrafter"/>
</dbReference>
<dbReference type="GO" id="GO:0006450">
    <property type="term" value="P:regulation of translational fidelity"/>
    <property type="evidence" value="ECO:0007669"/>
    <property type="project" value="TreeGrafter"/>
</dbReference>
<dbReference type="GO" id="GO:0002949">
    <property type="term" value="P:tRNA threonylcarbamoyladenosine modification"/>
    <property type="evidence" value="ECO:0007669"/>
    <property type="project" value="UniProtKB-UniRule"/>
</dbReference>
<dbReference type="FunFam" id="3.90.870.10:FF:000004">
    <property type="entry name" value="Threonylcarbamoyl-AMP synthase"/>
    <property type="match status" value="1"/>
</dbReference>
<dbReference type="Gene3D" id="3.90.870.10">
    <property type="entry name" value="DHBP synthase"/>
    <property type="match status" value="1"/>
</dbReference>
<dbReference type="HAMAP" id="MF_01852">
    <property type="entry name" value="TsaC"/>
    <property type="match status" value="1"/>
</dbReference>
<dbReference type="InterPro" id="IPR017945">
    <property type="entry name" value="DHBP_synth_RibB-like_a/b_dom"/>
</dbReference>
<dbReference type="InterPro" id="IPR006070">
    <property type="entry name" value="Sua5-like_dom"/>
</dbReference>
<dbReference type="InterPro" id="IPR023535">
    <property type="entry name" value="TC-AMP_synthase"/>
</dbReference>
<dbReference type="InterPro" id="IPR050156">
    <property type="entry name" value="TC-AMP_synthase_SUA5"/>
</dbReference>
<dbReference type="NCBIfam" id="TIGR00057">
    <property type="entry name" value="L-threonylcarbamoyladenylate synthase"/>
    <property type="match status" value="1"/>
</dbReference>
<dbReference type="PANTHER" id="PTHR17490">
    <property type="entry name" value="SUA5"/>
    <property type="match status" value="1"/>
</dbReference>
<dbReference type="PANTHER" id="PTHR17490:SF18">
    <property type="entry name" value="THREONYLCARBAMOYL-AMP SYNTHASE"/>
    <property type="match status" value="1"/>
</dbReference>
<dbReference type="Pfam" id="PF01300">
    <property type="entry name" value="Sua5_yciO_yrdC"/>
    <property type="match status" value="1"/>
</dbReference>
<dbReference type="SUPFAM" id="SSF55821">
    <property type="entry name" value="YrdC/RibB"/>
    <property type="match status" value="1"/>
</dbReference>
<dbReference type="PROSITE" id="PS51163">
    <property type="entry name" value="YRDC"/>
    <property type="match status" value="1"/>
</dbReference>
<keyword id="KW-0067">ATP-binding</keyword>
<keyword id="KW-0963">Cytoplasm</keyword>
<keyword id="KW-0547">Nucleotide-binding</keyword>
<keyword id="KW-0548">Nucleotidyltransferase</keyword>
<keyword id="KW-1185">Reference proteome</keyword>
<keyword id="KW-0808">Transferase</keyword>
<keyword id="KW-0819">tRNA processing</keyword>
<gene>
    <name evidence="1" type="primary">tsaC</name>
    <name type="synonym">rimN</name>
    <name type="ordered locus">IL0022</name>
</gene>
<feature type="chain" id="PRO_0000352930" description="Threonylcarbamoyl-AMP synthase">
    <location>
        <begin position="1"/>
        <end position="186"/>
    </location>
</feature>
<feature type="domain" description="YrdC-like" evidence="1">
    <location>
        <begin position="1"/>
        <end position="186"/>
    </location>
</feature>
<accession>Q5QXJ5</accession>
<proteinExistence type="inferred from homology"/>
<name>TSAC_IDILO</name>
<evidence type="ECO:0000255" key="1">
    <source>
        <dbReference type="HAMAP-Rule" id="MF_01852"/>
    </source>
</evidence>
<organism>
    <name type="scientific">Idiomarina loihiensis (strain ATCC BAA-735 / DSM 15497 / L2-TR)</name>
    <dbReference type="NCBI Taxonomy" id="283942"/>
    <lineage>
        <taxon>Bacteria</taxon>
        <taxon>Pseudomonadati</taxon>
        <taxon>Pseudomonadota</taxon>
        <taxon>Gammaproteobacteria</taxon>
        <taxon>Alteromonadales</taxon>
        <taxon>Idiomarinaceae</taxon>
        <taxon>Idiomarina</taxon>
    </lineage>
</organism>